<accession>Q9CN32</accession>
<protein>
    <recommendedName>
        <fullName>Uncharacterized protein PM0613</fullName>
    </recommendedName>
</protein>
<gene>
    <name type="ordered locus">PM0613</name>
</gene>
<proteinExistence type="predicted"/>
<feature type="chain" id="PRO_0000216299" description="Uncharacterized protein PM0613">
    <location>
        <begin position="1"/>
        <end position="130"/>
    </location>
</feature>
<feature type="transmembrane region" description="Helical" evidence="1">
    <location>
        <begin position="35"/>
        <end position="57"/>
    </location>
</feature>
<feature type="transmembrane region" description="Helical" evidence="1">
    <location>
        <begin position="72"/>
        <end position="91"/>
    </location>
</feature>
<organism>
    <name type="scientific">Pasteurella multocida (strain Pm70)</name>
    <dbReference type="NCBI Taxonomy" id="272843"/>
    <lineage>
        <taxon>Bacteria</taxon>
        <taxon>Pseudomonadati</taxon>
        <taxon>Pseudomonadota</taxon>
        <taxon>Gammaproteobacteria</taxon>
        <taxon>Pasteurellales</taxon>
        <taxon>Pasteurellaceae</taxon>
        <taxon>Pasteurella</taxon>
    </lineage>
</organism>
<keyword id="KW-1003">Cell membrane</keyword>
<keyword id="KW-0472">Membrane</keyword>
<keyword id="KW-1185">Reference proteome</keyword>
<keyword id="KW-0812">Transmembrane</keyword>
<keyword id="KW-1133">Transmembrane helix</keyword>
<name>Y613_PASMU</name>
<evidence type="ECO:0000255" key="1"/>
<evidence type="ECO:0000305" key="2"/>
<reference key="1">
    <citation type="journal article" date="2001" name="Proc. Natl. Acad. Sci. U.S.A.">
        <title>Complete genomic sequence of Pasteurella multocida Pm70.</title>
        <authorList>
            <person name="May B.J."/>
            <person name="Zhang Q."/>
            <person name="Li L.L."/>
            <person name="Paustian M.L."/>
            <person name="Whittam T.S."/>
            <person name="Kapur V."/>
        </authorList>
    </citation>
    <scope>NUCLEOTIDE SEQUENCE [LARGE SCALE GENOMIC DNA]</scope>
    <source>
        <strain>Pm70</strain>
    </source>
</reference>
<comment type="subcellular location">
    <subcellularLocation>
        <location evidence="2">Cell membrane</location>
        <topology evidence="2">Multi-pass membrane protein</topology>
    </subcellularLocation>
</comment>
<sequence length="130" mass="14769">MQILQKIKNITLTSLELIHVRLDMARIELVEQKNFLITLLSALFVIFILLLVSFISLLFGLNSLLDPETKQIVFFAISAGAFFLILILLLLMRKILKKQRNFMVDTLTEVKHDIQAIKGALGSPSSKDQE</sequence>
<dbReference type="EMBL" id="AE004439">
    <property type="protein sequence ID" value="AAK02697.1"/>
    <property type="molecule type" value="Genomic_DNA"/>
</dbReference>
<dbReference type="RefSeq" id="WP_005726461.1">
    <property type="nucleotide sequence ID" value="NC_002663.1"/>
</dbReference>
<dbReference type="SMR" id="Q9CN32"/>
<dbReference type="STRING" id="272843.PM0613"/>
<dbReference type="EnsemblBacteria" id="AAK02697">
    <property type="protein sequence ID" value="AAK02697"/>
    <property type="gene ID" value="PM0613"/>
</dbReference>
<dbReference type="KEGG" id="pmu:PM0613"/>
<dbReference type="PATRIC" id="fig|272843.6.peg.621"/>
<dbReference type="HOGENOM" id="CLU_151911_1_0_6"/>
<dbReference type="OrthoDB" id="5690744at2"/>
<dbReference type="Proteomes" id="UP000000809">
    <property type="component" value="Chromosome"/>
</dbReference>
<dbReference type="GO" id="GO:0005886">
    <property type="term" value="C:plasma membrane"/>
    <property type="evidence" value="ECO:0007669"/>
    <property type="project" value="UniProtKB-SubCell"/>
</dbReference>
<dbReference type="InterPro" id="IPR009937">
    <property type="entry name" value="Phage_holin_3_6"/>
</dbReference>
<dbReference type="Pfam" id="PF07332">
    <property type="entry name" value="Phage_holin_3_6"/>
    <property type="match status" value="1"/>
</dbReference>